<keyword id="KW-0027">Amidation</keyword>
<keyword id="KW-0044">Antibiotic</keyword>
<keyword id="KW-0929">Antimicrobial</keyword>
<keyword id="KW-0903">Direct protein sequencing</keyword>
<keyword id="KW-0295">Fungicide</keyword>
<keyword id="KW-0391">Immunity</keyword>
<keyword id="KW-0399">Innate immunity</keyword>
<keyword id="KW-0472">Membrane</keyword>
<keyword id="KW-0964">Secreted</keyword>
<keyword id="KW-1052">Target cell membrane</keyword>
<keyword id="KW-1053">Target membrane</keyword>
<accession>P0DQX5</accession>
<comment type="function">
    <text evidence="1 2 3 4 6 7">Short linear cationic amphipathic alpha-helical antimicrobial peptide (AMP) with potent activity against both Gram-positive and Gram-negative bacteria, moderate activity against the yeasts C.albicans, S.cerevisiae, C.glabrata, C.krusei, and C.tropicalis, and low activity against the yeasts C.dubliniensis and C.parapsilosis (PubMed:20198492, PubMed:28600071, Ref.2). Minimum inhibitory concentrations (MIC) have been tested on B.subtilis (MIC=1.0 uM), S.aureus (MIC=11.1 uM), E.coli (MIC=2.6 uM), P.aeruginosa (MIC=15.8 uM), and the yeast C.albicans (MIC=6.6 uM) (PubMed:20198492, Ref.2). Also shows noticeable hemolytic activity (LC(50)=91 uM on human erythrocytes, and 78.1 uM on rat cells), indicating it cannot be considered for therapeutic application (PubMed:20198492). Interacts more strongly with anionic membranes compared to the zwitterionic ones because of the electrostatic contribution (PubMed:32336099). Interaction with anionic membranes is accompanied by structuring of the peptide as an alpha-helix and deep insertion into the membrane causing substantial membrane permeabilization at very low peptide/lipid molar ratios (PubMed:32336099). In the context of inflammation and cancer tests, is weakly cytotoxic to normal cells, induces calcium signaling but does not impact cAMP production (PubMed:22100226, PubMed:36548715). In addition, prevents LPS-induced nitric oxid (NO) synthesis but does not affect the IP3 signaling and pro-inflammatory activation of endothelial cells (PubMed:36548715). Is cytotoxic towards cancer cells (HeLa S3 (IC(50)=12 uM), CRC SW 480 (IC(50)=35 uM) and CCRF-CEM T (IC(50)=34 uM)), but does not show significant antiproliferative activity on the breast cancer cell line MDA-MB-231 (PubMed:22100226, PubMed:36548715).</text>
</comment>
<comment type="subcellular location">
    <subcellularLocation>
        <location evidence="1">Secreted</location>
    </subcellularLocation>
    <subcellularLocation>
        <location evidence="4 14">Target cell membrane</location>
    </subcellularLocation>
    <text evidence="4">Adopts an amphipathic alpha-helical structure in the presence of membrane models, and inserts into membranes.</text>
</comment>
<comment type="tissue specificity">
    <text evidence="14">Expressed by the venom gland.</text>
</comment>
<comment type="mass spectrometry">
    <text>Monoisotopic mass.</text>
</comment>
<comment type="biotechnology">
    <text evidence="5">The synthetic analog S5T (with the Ser-5 replaced by a Thr) is a possible anti-leishmanial therapeutic candidate against both cutaneous and visceral leishmaniasis. In vitro, this analog shows significant anti-leishmanial activity towards two life forms of the dimorphic parasite, the free-swimming infective metacyclic promastigotes and the intracellular amastigotes responsible for the systemic infection.</text>
</comment>
<comment type="miscellaneous">
    <text evidence="1 3 7">Many analogs have been synthesized to study the effect on cationicity, hydrophobicity, alpha-helicity, amphipathicity, antibacterial, antifungal and hemolytic activities (PubMed:20198492, PubMed:28600071, Ref.2). A decrease of hemolytic activity is accompanied by undesirable decrease of antimicrobial potency (PubMed:20198492).</text>
</comment>
<comment type="similarity">
    <text evidence="13">Belongs to the lasioglossin-like family.</text>
</comment>
<protein>
    <recommendedName>
        <fullName evidence="8 9 10 11">Halictine-2</fullName>
        <shortName evidence="8 10 11">HAL-2</shortName>
    </recommendedName>
    <alternativeName>
        <fullName evidence="13">Halictin 2</fullName>
    </alternativeName>
    <alternativeName>
        <fullName evidence="12">Halictine II</fullName>
    </alternativeName>
</protein>
<reference key="1">
    <citation type="journal article" date="2010" name="Amino Acids">
        <title>Novel antimicrobial peptides from the venom of the eusocial bee Halictus sexcinctus (Hymenoptera: Halictidae) and their analogs.</title>
        <authorList>
            <person name="Monincova L."/>
            <person name="Budesinsky M."/>
            <person name="Slaninova J."/>
            <person name="Hovorka O."/>
            <person name="Cvacka J."/>
            <person name="Voburka Z."/>
            <person name="Fucik V."/>
            <person name="Borovickova L."/>
            <person name="Bednarova L."/>
            <person name="Straka J."/>
            <person name="Cerovsky V."/>
        </authorList>
    </citation>
    <scope>PROTEIN SEQUENCE</scope>
    <scope>FUNCTION</scope>
    <scope>AMIDATION AT LYS-12</scope>
    <scope>MASS SPECTROMETRY</scope>
    <scope>SUBCELLULAR LOCATION</scope>
    <scope>SYNTHESIS</scope>
    <scope>MUTAGENESIS OF SER-5</scope>
    <source>
        <tissue>Venom</tissue>
    </source>
</reference>
<reference key="2">
    <citation type="journal article" date="2011" name="Cent. Eur. J. Biol.">
        <title>The antifungal effect of peptides from hymenoptera venom and their analogs.</title>
        <authorList>
            <person name="Slaninova J."/>
            <person name="Putnova H."/>
            <person name="Borovickova L."/>
            <person name="Sacha P."/>
            <person name="Cerovsky V."/>
            <person name="Monincova L."/>
            <person name="Fucik V."/>
        </authorList>
    </citation>
    <scope>FUNCTION ON THE YEAST CANDIDA ALBICANS</scope>
</reference>
<reference key="3">
    <citation type="journal article" date="2012" name="Peptides">
        <title>Toxicity study of antimicrobial peptides from wild bee venom and their analogs toward mammalian normal and cancer cells.</title>
        <authorList>
            <person name="Slaninova J."/>
            <person name="Mlsova V."/>
            <person name="Kroupova H."/>
            <person name="Alan L."/>
            <person name="Tumova T."/>
            <person name="Monincova L."/>
            <person name="Borovickova L."/>
            <person name="Fucik V."/>
            <person name="Cerovsky V."/>
        </authorList>
    </citation>
    <scope>FUNCTION</scope>
</reference>
<reference key="4">
    <citation type="journal article" date="2017" name="Biochim. Biophys. Acta">
        <title>Synthetic antimicrobial peptides of the halictines family disturb the membrane integrity of Candida cells.</title>
        <authorList>
            <person name="Kodedova M."/>
            <person name="Sychrova H."/>
        </authorList>
    </citation>
    <scope>FUNCTION ON YEASTS</scope>
</reference>
<reference key="5">
    <citation type="journal article" date="2020" name="Exp. Parasitol.">
        <title>Halictine-2 antimicrobial peptide shows promising anti-parasitic activity against Leishmania spp.</title>
        <authorList>
            <person name="Pitale D.M."/>
            <person name="Kaur G."/>
            <person name="Baghel M."/>
            <person name="Kaur K.J."/>
            <person name="Shaha C."/>
        </authorList>
    </citation>
    <scope>FUNCTION AS ANTI-LEISHMANIAL AGENT</scope>
    <scope>MUTAGENESIS OF SER-5</scope>
</reference>
<reference key="6">
    <citation type="journal article" date="2020" name="Langmuir">
        <title>Revealing the mode of action of halictine antimicrobial peptides: a comprehensive study with model membranes.</title>
        <authorList>
            <person name="Domingues T.M."/>
            <person name="Perez K.R."/>
            <person name="Riske K.A."/>
        </authorList>
    </citation>
    <scope>FUNCTION</scope>
    <scope>SUBCELLULAR LOCATION</scope>
</reference>
<reference key="7">
    <citation type="journal article" date="2022" name="Toxins">
        <title>The pharmacological potential of novel melittin variants from the honeybee and solitary bees against inflammation and cancer.</title>
        <authorList>
            <person name="Erkoc P."/>
            <person name="von Reumont B.M."/>
            <person name="Lueddecke T."/>
            <person name="Henke M."/>
            <person name="Ulshoefer T."/>
            <person name="Vilcinskas A."/>
            <person name="Fuerst R."/>
            <person name="Schiffmann S."/>
        </authorList>
    </citation>
    <scope>FUNCTION</scope>
</reference>
<dbReference type="GO" id="GO:0005576">
    <property type="term" value="C:extracellular region"/>
    <property type="evidence" value="ECO:0007669"/>
    <property type="project" value="UniProtKB-SubCell"/>
</dbReference>
<dbReference type="GO" id="GO:0016020">
    <property type="term" value="C:membrane"/>
    <property type="evidence" value="ECO:0007669"/>
    <property type="project" value="UniProtKB-KW"/>
</dbReference>
<dbReference type="GO" id="GO:0044218">
    <property type="term" value="C:other organism cell membrane"/>
    <property type="evidence" value="ECO:0007669"/>
    <property type="project" value="UniProtKB-KW"/>
</dbReference>
<dbReference type="GO" id="GO:0042742">
    <property type="term" value="P:defense response to bacterium"/>
    <property type="evidence" value="ECO:0007669"/>
    <property type="project" value="UniProtKB-KW"/>
</dbReference>
<dbReference type="GO" id="GO:0050832">
    <property type="term" value="P:defense response to fungus"/>
    <property type="evidence" value="ECO:0007669"/>
    <property type="project" value="UniProtKB-KW"/>
</dbReference>
<dbReference type="GO" id="GO:0045087">
    <property type="term" value="P:innate immune response"/>
    <property type="evidence" value="ECO:0007669"/>
    <property type="project" value="UniProtKB-KW"/>
</dbReference>
<dbReference type="GO" id="GO:0031640">
    <property type="term" value="P:killing of cells of another organism"/>
    <property type="evidence" value="ECO:0007669"/>
    <property type="project" value="UniProtKB-KW"/>
</dbReference>
<evidence type="ECO:0000269" key="1">
    <source>
    </source>
</evidence>
<evidence type="ECO:0000269" key="2">
    <source>
    </source>
</evidence>
<evidence type="ECO:0000269" key="3">
    <source>
    </source>
</evidence>
<evidence type="ECO:0000269" key="4">
    <source>
    </source>
</evidence>
<evidence type="ECO:0000269" key="5">
    <source>
    </source>
</evidence>
<evidence type="ECO:0000269" key="6">
    <source>
    </source>
</evidence>
<evidence type="ECO:0000269" key="7">
    <source ref="2"/>
</evidence>
<evidence type="ECO:0000303" key="8">
    <source>
    </source>
</evidence>
<evidence type="ECO:0000303" key="9">
    <source>
    </source>
</evidence>
<evidence type="ECO:0000303" key="10">
    <source>
    </source>
</evidence>
<evidence type="ECO:0000303" key="11">
    <source>
    </source>
</evidence>
<evidence type="ECO:0000303" key="12">
    <source ref="2"/>
</evidence>
<evidence type="ECO:0000305" key="13"/>
<evidence type="ECO:0000305" key="14">
    <source>
    </source>
</evidence>
<feature type="peptide" id="PRO_0000457809" description="Halictine-2" evidence="1">
    <location>
        <begin position="1"/>
        <end position="12"/>
    </location>
</feature>
<feature type="modified residue" description="Lysine amide" evidence="1">
    <location>
        <position position="12"/>
    </location>
</feature>
<feature type="mutagenesis site" description="No significant change in antibacterial and hemolytic activities. Increase in alpha-helicity. Increase in anti-leishmania activity." evidence="1 5">
    <original>S</original>
    <variation>T</variation>
    <location>
        <position position="5"/>
    </location>
</feature>
<sequence>GKWMSLLKHILK</sequence>
<name>HAL2_HALST</name>
<organism>
    <name type="scientific">Halictus sexcinctus</name>
    <name type="common">Six-banded furrow bee</name>
    <name type="synonym">Apis sexcincta</name>
    <dbReference type="NCBI Taxonomy" id="115105"/>
    <lineage>
        <taxon>Eukaryota</taxon>
        <taxon>Metazoa</taxon>
        <taxon>Ecdysozoa</taxon>
        <taxon>Arthropoda</taxon>
        <taxon>Hexapoda</taxon>
        <taxon>Insecta</taxon>
        <taxon>Pterygota</taxon>
        <taxon>Neoptera</taxon>
        <taxon>Endopterygota</taxon>
        <taxon>Hymenoptera</taxon>
        <taxon>Apocrita</taxon>
        <taxon>Aculeata</taxon>
        <taxon>Apoidea</taxon>
        <taxon>Anthophila</taxon>
        <taxon>Halictidae</taxon>
        <taxon>Halictinae</taxon>
        <taxon>Halictini</taxon>
        <taxon>Halictus</taxon>
        <taxon>Halictus</taxon>
    </lineage>
</organism>
<proteinExistence type="evidence at protein level"/>